<accession>Q7WKE3</accession>
<reference key="1">
    <citation type="journal article" date="2003" name="Nat. Genet.">
        <title>Comparative analysis of the genome sequences of Bordetella pertussis, Bordetella parapertussis and Bordetella bronchiseptica.</title>
        <authorList>
            <person name="Parkhill J."/>
            <person name="Sebaihia M."/>
            <person name="Preston A."/>
            <person name="Murphy L.D."/>
            <person name="Thomson N.R."/>
            <person name="Harris D.E."/>
            <person name="Holden M.T.G."/>
            <person name="Churcher C.M."/>
            <person name="Bentley S.D."/>
            <person name="Mungall K.L."/>
            <person name="Cerdeno-Tarraga A.-M."/>
            <person name="Temple L."/>
            <person name="James K.D."/>
            <person name="Harris B."/>
            <person name="Quail M.A."/>
            <person name="Achtman M."/>
            <person name="Atkin R."/>
            <person name="Baker S."/>
            <person name="Basham D."/>
            <person name="Bason N."/>
            <person name="Cherevach I."/>
            <person name="Chillingworth T."/>
            <person name="Collins M."/>
            <person name="Cronin A."/>
            <person name="Davis P."/>
            <person name="Doggett J."/>
            <person name="Feltwell T."/>
            <person name="Goble A."/>
            <person name="Hamlin N."/>
            <person name="Hauser H."/>
            <person name="Holroyd S."/>
            <person name="Jagels K."/>
            <person name="Leather S."/>
            <person name="Moule S."/>
            <person name="Norberczak H."/>
            <person name="O'Neil S."/>
            <person name="Ormond D."/>
            <person name="Price C."/>
            <person name="Rabbinowitsch E."/>
            <person name="Rutter S."/>
            <person name="Sanders M."/>
            <person name="Saunders D."/>
            <person name="Seeger K."/>
            <person name="Sharp S."/>
            <person name="Simmonds M."/>
            <person name="Skelton J."/>
            <person name="Squares R."/>
            <person name="Squares S."/>
            <person name="Stevens K."/>
            <person name="Unwin L."/>
            <person name="Whitehead S."/>
            <person name="Barrell B.G."/>
            <person name="Maskell D.J."/>
        </authorList>
    </citation>
    <scope>NUCLEOTIDE SEQUENCE [LARGE SCALE GENOMIC DNA]</scope>
    <source>
        <strain>ATCC BAA-588 / NCTC 13252 / RB50</strain>
    </source>
</reference>
<feature type="chain" id="PRO_0000182831" description="Deoxyuridine 5'-triphosphate nucleotidohydrolase">
    <location>
        <begin position="1"/>
        <end position="149"/>
    </location>
</feature>
<feature type="binding site" evidence="1">
    <location>
        <begin position="68"/>
        <end position="70"/>
    </location>
    <ligand>
        <name>substrate</name>
    </ligand>
</feature>
<feature type="binding site" evidence="1">
    <location>
        <position position="81"/>
    </location>
    <ligand>
        <name>substrate</name>
    </ligand>
</feature>
<feature type="binding site" evidence="1">
    <location>
        <begin position="85"/>
        <end position="87"/>
    </location>
    <ligand>
        <name>substrate</name>
    </ligand>
</feature>
<feature type="binding site" evidence="1">
    <location>
        <position position="95"/>
    </location>
    <ligand>
        <name>substrate</name>
    </ligand>
</feature>
<gene>
    <name evidence="1" type="primary">dut</name>
    <name type="ordered locus">BB2164</name>
</gene>
<keyword id="KW-0378">Hydrolase</keyword>
<keyword id="KW-0460">Magnesium</keyword>
<keyword id="KW-0479">Metal-binding</keyword>
<keyword id="KW-0546">Nucleotide metabolism</keyword>
<sequence length="149" mass="15918">MKSVDLKILDARMREYLPAYATPGSAGLDLRACTEASLVIEPGQTVLVPTGLAIHIGDPRYAAMILPRSGLGHKHGIVLGNLVGLIDSDYQGQLMVSTWNRGTQPFTLDPMERLAQLVIVPVQQVAFNVVEDFDASERGAGGFGSTGRA</sequence>
<name>DUT_BORBR</name>
<evidence type="ECO:0000255" key="1">
    <source>
        <dbReference type="HAMAP-Rule" id="MF_00116"/>
    </source>
</evidence>
<protein>
    <recommendedName>
        <fullName evidence="1">Deoxyuridine 5'-triphosphate nucleotidohydrolase</fullName>
        <shortName evidence="1">dUTPase</shortName>
        <ecNumber evidence="1">3.6.1.23</ecNumber>
    </recommendedName>
    <alternativeName>
        <fullName evidence="1">dUTP pyrophosphatase</fullName>
    </alternativeName>
</protein>
<comment type="function">
    <text evidence="1">This enzyme is involved in nucleotide metabolism: it produces dUMP, the immediate precursor of thymidine nucleotides and it decreases the intracellular concentration of dUTP so that uracil cannot be incorporated into DNA.</text>
</comment>
<comment type="catalytic activity">
    <reaction evidence="1">
        <text>dUTP + H2O = dUMP + diphosphate + H(+)</text>
        <dbReference type="Rhea" id="RHEA:10248"/>
        <dbReference type="ChEBI" id="CHEBI:15377"/>
        <dbReference type="ChEBI" id="CHEBI:15378"/>
        <dbReference type="ChEBI" id="CHEBI:33019"/>
        <dbReference type="ChEBI" id="CHEBI:61555"/>
        <dbReference type="ChEBI" id="CHEBI:246422"/>
        <dbReference type="EC" id="3.6.1.23"/>
    </reaction>
</comment>
<comment type="cofactor">
    <cofactor evidence="1">
        <name>Mg(2+)</name>
        <dbReference type="ChEBI" id="CHEBI:18420"/>
    </cofactor>
</comment>
<comment type="pathway">
    <text evidence="1">Pyrimidine metabolism; dUMP biosynthesis; dUMP from dCTP (dUTP route): step 2/2.</text>
</comment>
<comment type="similarity">
    <text evidence="1">Belongs to the dUTPase family.</text>
</comment>
<proteinExistence type="inferred from homology"/>
<dbReference type="EC" id="3.6.1.23" evidence="1"/>
<dbReference type="EMBL" id="BX640443">
    <property type="protein sequence ID" value="CAE32660.1"/>
    <property type="molecule type" value="Genomic_DNA"/>
</dbReference>
<dbReference type="RefSeq" id="WP_003812576.1">
    <property type="nucleotide sequence ID" value="NC_002927.3"/>
</dbReference>
<dbReference type="SMR" id="Q7WKE3"/>
<dbReference type="GeneID" id="93203748"/>
<dbReference type="KEGG" id="bbr:BB2164"/>
<dbReference type="eggNOG" id="COG0756">
    <property type="taxonomic scope" value="Bacteria"/>
</dbReference>
<dbReference type="HOGENOM" id="CLU_068508_1_1_4"/>
<dbReference type="UniPathway" id="UPA00610">
    <property type="reaction ID" value="UER00666"/>
</dbReference>
<dbReference type="Proteomes" id="UP000001027">
    <property type="component" value="Chromosome"/>
</dbReference>
<dbReference type="GO" id="GO:0004170">
    <property type="term" value="F:dUTP diphosphatase activity"/>
    <property type="evidence" value="ECO:0007669"/>
    <property type="project" value="UniProtKB-UniRule"/>
</dbReference>
<dbReference type="GO" id="GO:0000287">
    <property type="term" value="F:magnesium ion binding"/>
    <property type="evidence" value="ECO:0007669"/>
    <property type="project" value="UniProtKB-UniRule"/>
</dbReference>
<dbReference type="GO" id="GO:0006226">
    <property type="term" value="P:dUMP biosynthetic process"/>
    <property type="evidence" value="ECO:0007669"/>
    <property type="project" value="UniProtKB-UniRule"/>
</dbReference>
<dbReference type="GO" id="GO:0046081">
    <property type="term" value="P:dUTP catabolic process"/>
    <property type="evidence" value="ECO:0007669"/>
    <property type="project" value="InterPro"/>
</dbReference>
<dbReference type="CDD" id="cd07557">
    <property type="entry name" value="trimeric_dUTPase"/>
    <property type="match status" value="1"/>
</dbReference>
<dbReference type="FunFam" id="2.70.40.10:FF:000002">
    <property type="entry name" value="dUTP diphosphatase"/>
    <property type="match status" value="1"/>
</dbReference>
<dbReference type="Gene3D" id="2.70.40.10">
    <property type="match status" value="1"/>
</dbReference>
<dbReference type="HAMAP" id="MF_00116">
    <property type="entry name" value="dUTPase_bact"/>
    <property type="match status" value="1"/>
</dbReference>
<dbReference type="InterPro" id="IPR008181">
    <property type="entry name" value="dUTPase"/>
</dbReference>
<dbReference type="InterPro" id="IPR029054">
    <property type="entry name" value="dUTPase-like"/>
</dbReference>
<dbReference type="InterPro" id="IPR036157">
    <property type="entry name" value="dUTPase-like_sf"/>
</dbReference>
<dbReference type="InterPro" id="IPR033704">
    <property type="entry name" value="dUTPase_trimeric"/>
</dbReference>
<dbReference type="NCBIfam" id="TIGR00576">
    <property type="entry name" value="dut"/>
    <property type="match status" value="1"/>
</dbReference>
<dbReference type="NCBIfam" id="NF001862">
    <property type="entry name" value="PRK00601.1"/>
    <property type="match status" value="1"/>
</dbReference>
<dbReference type="PANTHER" id="PTHR11241">
    <property type="entry name" value="DEOXYURIDINE 5'-TRIPHOSPHATE NUCLEOTIDOHYDROLASE"/>
    <property type="match status" value="1"/>
</dbReference>
<dbReference type="PANTHER" id="PTHR11241:SF0">
    <property type="entry name" value="DEOXYURIDINE 5'-TRIPHOSPHATE NUCLEOTIDOHYDROLASE"/>
    <property type="match status" value="1"/>
</dbReference>
<dbReference type="Pfam" id="PF00692">
    <property type="entry name" value="dUTPase"/>
    <property type="match status" value="1"/>
</dbReference>
<dbReference type="SUPFAM" id="SSF51283">
    <property type="entry name" value="dUTPase-like"/>
    <property type="match status" value="1"/>
</dbReference>
<organism>
    <name type="scientific">Bordetella bronchiseptica (strain ATCC BAA-588 / NCTC 13252 / RB50)</name>
    <name type="common">Alcaligenes bronchisepticus</name>
    <dbReference type="NCBI Taxonomy" id="257310"/>
    <lineage>
        <taxon>Bacteria</taxon>
        <taxon>Pseudomonadati</taxon>
        <taxon>Pseudomonadota</taxon>
        <taxon>Betaproteobacteria</taxon>
        <taxon>Burkholderiales</taxon>
        <taxon>Alcaligenaceae</taxon>
        <taxon>Bordetella</taxon>
    </lineage>
</organism>